<feature type="signal peptide" evidence="1">
    <location>
        <begin position="1"/>
        <end position="18"/>
    </location>
</feature>
<feature type="chain" id="PRO_0000086910" description="ECE1-I" evidence="39">
    <location>
        <begin position="19"/>
        <end position="31"/>
    </location>
</feature>
<feature type="chain" id="PRO_0000436401" description="ECE1-II" evidence="39">
    <location>
        <begin position="32"/>
        <end position="61"/>
    </location>
</feature>
<feature type="chain" id="PRO_0000436402" description="Candidalysin ECE1-III" evidence="39">
    <location>
        <begin position="62"/>
        <end position="93"/>
    </location>
</feature>
<feature type="chain" id="PRO_0000436403" description="ECE1-IV" evidence="39">
    <location>
        <begin position="94"/>
        <end position="126"/>
    </location>
</feature>
<feature type="chain" id="PRO_0000436404" description="ECE1-V" evidence="39">
    <location>
        <begin position="127"/>
        <end position="160"/>
    </location>
</feature>
<feature type="chain" id="PRO_0000436405" description="ECE1-VI" evidence="39">
    <location>
        <begin position="161"/>
        <end position="194"/>
    </location>
</feature>
<feature type="chain" id="PRO_0000436406" description="ECE1-VII" evidence="39">
    <location>
        <begin position="195"/>
        <end position="228"/>
    </location>
</feature>
<feature type="chain" id="PRO_0000436407" description="ECE1-VIII" evidence="39">
    <location>
        <begin position="229"/>
        <end position="271"/>
    </location>
</feature>
<feature type="transmembrane region" description="Helical" evidence="1">
    <location>
        <begin position="62"/>
        <end position="82"/>
    </location>
</feature>
<feature type="mutagenesis site" description="Impairs secretion of candidalysin and subsequent induction of epithelial damage and inflammatory responses in vitro, and leads to attenuated virulence in vivo in a murine model of oropharyngeal candidiasis." evidence="14">
    <original>R</original>
    <variation>A</variation>
    <location>
        <position position="61"/>
    </location>
</feature>
<feature type="mutagenesis site" description="Impairs polymerization of candidalysin ECE1-III and subsequent pore formation in synthetic lipid systems, and fails to activate the danger response pathway." evidence="31">
    <original>G</original>
    <variation>W</variation>
    <location>
        <position position="65"/>
    </location>
</feature>
<feature type="mutagenesis site" description="Impairs secretion of candidalysin and subsequent induction of epithelial damage and inflammatory responses in vitro, and leads to attenuated virulence in vivo in a murine model of oropharyngeal candidiasis." evidence="14">
    <original>R</original>
    <variation>A</variation>
    <location>
        <position position="93"/>
    </location>
</feature>
<name>CECE1_CANAL</name>
<gene>
    <name evidence="38" type="primary">ECE1</name>
    <name type="ordered locus">CAALFM_C403470CA</name>
    <name type="ORF">CaO19.10882</name>
    <name type="ORF">CaO19.3374</name>
</gene>
<dbReference type="EMBL" id="L17087">
    <property type="protein sequence ID" value="AAA34338.2"/>
    <property type="molecule type" value="Genomic_DNA"/>
</dbReference>
<dbReference type="EMBL" id="CP017626">
    <property type="protein sequence ID" value="AOW29105.1"/>
    <property type="molecule type" value="Genomic_DNA"/>
</dbReference>
<dbReference type="RefSeq" id="XP_711594.1">
    <property type="nucleotide sequence ID" value="XM_706502.1"/>
</dbReference>
<dbReference type="SMR" id="Q07730"/>
<dbReference type="STRING" id="237561.Q07730"/>
<dbReference type="TCDB" id="1.C.139.1.1">
    <property type="family name" value="the candidalysin (cl) family"/>
</dbReference>
<dbReference type="EnsemblFungi" id="C4_03470C_A-T">
    <property type="protein sequence ID" value="C4_03470C_A-T-p1"/>
    <property type="gene ID" value="C4_03470C_A"/>
</dbReference>
<dbReference type="GeneID" id="3646814"/>
<dbReference type="KEGG" id="cal:CAALFM_C403470CA"/>
<dbReference type="CGD" id="CAL0000199701">
    <property type="gene designation" value="ECE1"/>
</dbReference>
<dbReference type="VEuPathDB" id="FungiDB:C4_03470C_A"/>
<dbReference type="HOGENOM" id="CLU_1019397_0_0_1"/>
<dbReference type="InParanoid" id="Q07730"/>
<dbReference type="OMA" id="HAPEFNM"/>
<dbReference type="OrthoDB" id="4024249at2759"/>
<dbReference type="PHI-base" id="PHI:11814"/>
<dbReference type="PHI-base" id="PHI:123053"/>
<dbReference type="PHI-base" id="PHI:123207"/>
<dbReference type="PHI-base" id="PHI:123274"/>
<dbReference type="PHI-base" id="PHI:7644"/>
<dbReference type="PHI-base" id="PHI:7759"/>
<dbReference type="PHI-base" id="PHI:7895"/>
<dbReference type="PHI-base" id="PHI:8546"/>
<dbReference type="PHI-base" id="PHI:8787"/>
<dbReference type="PHI-base" id="PHI:9404"/>
<dbReference type="PHI-base" id="PHI:9442"/>
<dbReference type="PHI-base" id="PHI:9679"/>
<dbReference type="PRO" id="PR:Q07730"/>
<dbReference type="Proteomes" id="UP000000559">
    <property type="component" value="Chromosome 4"/>
</dbReference>
<dbReference type="GO" id="GO:0005576">
    <property type="term" value="C:extracellular region"/>
    <property type="evidence" value="ECO:0000314"/>
    <property type="project" value="CGD"/>
</dbReference>
<dbReference type="GO" id="GO:0020002">
    <property type="term" value="C:host cell plasma membrane"/>
    <property type="evidence" value="ECO:0000314"/>
    <property type="project" value="UniProtKB"/>
</dbReference>
<dbReference type="GO" id="GO:0030446">
    <property type="term" value="C:hyphal cell wall"/>
    <property type="evidence" value="ECO:0000314"/>
    <property type="project" value="CGD"/>
</dbReference>
<dbReference type="GO" id="GO:0016020">
    <property type="term" value="C:membrane"/>
    <property type="evidence" value="ECO:0007669"/>
    <property type="project" value="UniProtKB-KW"/>
</dbReference>
<dbReference type="GO" id="GO:0005539">
    <property type="term" value="F:glycosaminoglycan binding"/>
    <property type="evidence" value="ECO:0000314"/>
    <property type="project" value="CGD"/>
</dbReference>
<dbReference type="GO" id="GO:0140912">
    <property type="term" value="F:membrane destabilizing activity"/>
    <property type="evidence" value="ECO:0000314"/>
    <property type="project" value="CGD"/>
</dbReference>
<dbReference type="GO" id="GO:0090729">
    <property type="term" value="F:toxin activity"/>
    <property type="evidence" value="ECO:0007669"/>
    <property type="project" value="UniProtKB-KW"/>
</dbReference>
<dbReference type="GO" id="GO:0044179">
    <property type="term" value="P:hemolysis in another organism"/>
    <property type="evidence" value="ECO:0000315"/>
    <property type="project" value="CGD"/>
</dbReference>
<dbReference type="GO" id="GO:0009609">
    <property type="term" value="P:response to symbiotic bacterium"/>
    <property type="evidence" value="ECO:0000315"/>
    <property type="project" value="CGD"/>
</dbReference>
<dbReference type="GO" id="GO:0001897">
    <property type="term" value="P:symbiont-mediated cytolysis of host cell"/>
    <property type="evidence" value="ECO:0000314"/>
    <property type="project" value="UniProtKB"/>
</dbReference>
<dbReference type="GO" id="GO:0141139">
    <property type="term" value="P:symbiont-mediated disruption of host mucosa"/>
    <property type="evidence" value="ECO:0000269"/>
    <property type="project" value="SigSci"/>
</dbReference>
<dbReference type="GO" id="GO:0052553">
    <property type="term" value="P:symbiont-mediated perturbation of host immune response"/>
    <property type="evidence" value="ECO:0000315"/>
    <property type="project" value="CGD"/>
</dbReference>
<comment type="function">
    <text evidence="6 10 14">Secreted protein cleaved by KEX2 in 8 similar peptides (ECE1-I to ECE1-VIII) (PubMed:27027296, PubMed:29362237). Stimulates biofilm formation (PubMed:16839200).</text>
</comment>
<comment type="function">
    <molecule>Candidalysin ECE1-III</molecule>
    <text evidence="10 12 13 14 15 16 17 18 19 20 21 23 24 25 26 27 28 29 30 31 32 34 35">Acts as a cytolytic peptide toxin that directly damages host epithelial membranes, triggers a danger response signaling pathway and activates epithelial immunity (PubMed:27027296, PubMed:29101209, PubMed:29109176, PubMed:29362237, PubMed:29871918, PubMed:30622184, PubMed:31127085, PubMed:31401652, PubMed:33038250, PubMed:34245079, PubMed:35073742). Polymerizes in solution to form membrane pores to damage epithelial cells (PubMed:36173096). Induces calcium influx, oxidative stress, mitochondrial dysfunction and ATP depletion in host cells, leading to epithelial necrosis (PubMed:27027296, PubMed:34085369). Serves as a danger signal that potentiates the immune response, and more specifically IL-17 response (PubMed:29101209). Induces cytokine/chemokine secretion by host (especially CCL2/3/4, CXCL1 and S100A8), neutrophil recruitment, and promotes mortality in zebrafish and murine models of systemic fungal infection (PubMed:29109176, PubMed:31401652). Mediates distinct epithelial inflammatory responses through p38, EGFR-ERK and TREM-1/DAP12 pathways (PubMed:29109176, PubMed:35380879, PubMed:36037968, PubMed:36834667, PubMed:37087869). Acts as one of the hypha-derived drivers of NLRP3 inflammasome responses in primary macrophages and thus contributes to the capacity to induce maturation and secretion of IL-1beta from primary macrophages (PubMed:30323213, PubMed:30622184). Stimulates mast cells by mediating cross-talk between signaling pathways activated by the dectin-1 receptor and MAPKs (PubMed:35420364). Enables escape via the gasdermin-mediated pyroptosis, as well as a cell lysis pathway associated with macrophage extracellular trap formation termed ETosis (PubMed:36130496). Acts as the main hemolytic factor of C.albicans (PubMed:36548771). As an exotoxine, also promotes alcohol-associated liver disease or oral carcinogenesis (PubMed:31606552, PubMed:32170981).</text>
</comment>
<comment type="subunit">
    <molecule>Candidalysin ECE1-III</molecule>
    <text evidence="31">Polymerizes in solution to form membrane pores.</text>
</comment>
<comment type="subcellular location">
    <subcellularLocation>
        <location evidence="8">Secreted</location>
    </subcellularLocation>
</comment>
<comment type="subcellular location">
    <molecule>Candidalysin ECE1-III</molecule>
    <subcellularLocation>
        <location evidence="10">Host cell membrane</location>
        <topology evidence="1">Single-pass membrane protein</topology>
    </subcellularLocation>
    <text evidence="25">Candidalysin is delivered to the invasion pocket in which the hypha is tightly surrounded by the host membrane, to enable the full damage potential of during mucosal infection.</text>
</comment>
<comment type="developmental stage">
    <text evidence="36">Expressed in elongating hyphae but not in budding yeast cells (PubMed:8359888).</text>
</comment>
<comment type="induction">
    <text evidence="2 3 4 5 6 9 11 22 33">Expression is induced by human serum and epithelial cells (PubMed:24673895). Expression is regulated by the transcription factors EFG1, BCR1, TUP1, RFG1, NRG1 and AHR1 (PubMed:10464197, PubMed:10790384, PubMed:11532938, PubMed:15814840, PubMed:16839200, PubMed:32345638). Expression is down-regulated by minocycline (PubMed:28367877). Expression is controlled by a very long promoter of at minimum 1500 bp allowing a complex network of transcription factors to contribute to the gene's regulation (PubMed:36786567).</text>
</comment>
<comment type="domain">
    <text evidence="10">The N-terminal alpha-helix of peptide ECE1-III allows insertion of the toxin into host epithelial cells membranes (PubMed:27027296).</text>
</comment>
<comment type="PTM">
    <text evidence="7 10">Cleavage by KEX2 generates 8 peptides ECE1-I to ECE1-VIII, all terminating in Lys-Arg (PubMed:18625069, PubMed:27027296). Only peptide ECE1-III, called candidalysin, shows toxin activity (PubMed:27027296).</text>
</comment>
<comment type="disruption phenotype">
    <text evidence="10 12 19 28">Impairs damaging of epithelia and induction of p-MKP1/c-Fos-mediated danger responses and cytokine secretion (PubMed:27027296). Elicits a blunted type 17 immune response (PubMed:29101209). Induced significantly decreased levels of cytokine/chemokine secretion by host (PubMed:31401652). Fails to induce host mast cells activation (PubMed:35420364).</text>
</comment>
<keyword id="KW-0165">Cleavage on pair of basic residues</keyword>
<keyword id="KW-1032">Host cell membrane</keyword>
<keyword id="KW-1043">Host membrane</keyword>
<keyword id="KW-0472">Membrane</keyword>
<keyword id="KW-1185">Reference proteome</keyword>
<keyword id="KW-0677">Repeat</keyword>
<keyword id="KW-0964">Secreted</keyword>
<keyword id="KW-0732">Signal</keyword>
<keyword id="KW-0800">Toxin</keyword>
<keyword id="KW-0812">Transmembrane</keyword>
<keyword id="KW-1133">Transmembrane helix</keyword>
<keyword id="KW-0843">Virulence</keyword>
<reference key="1">
    <citation type="journal article" date="1993" name="Infect. Immun.">
        <title>Cloning and characterization of ECE1, a gene expressed in association with cell elongation of the dimorphic pathogen Candida albicans.</title>
        <authorList>
            <person name="Birse C.E."/>
            <person name="Irwin M.Y."/>
            <person name="Fonzi W.A."/>
            <person name="Sypherd P.S."/>
        </authorList>
    </citation>
    <scope>NUCLEOTIDE SEQUENCE [GENOMIC DNA]</scope>
    <scope>DEVELOPMENTAL STAGE</scope>
    <source>
        <strain>SC5314 / ATCC MYA-2876</strain>
    </source>
</reference>
<reference key="2">
    <citation type="journal article" date="2004" name="Proc. Natl. Acad. Sci. U.S.A.">
        <title>The diploid genome sequence of Candida albicans.</title>
        <authorList>
            <person name="Jones T."/>
            <person name="Federspiel N.A."/>
            <person name="Chibana H."/>
            <person name="Dungan J."/>
            <person name="Kalman S."/>
            <person name="Magee B.B."/>
            <person name="Newport G."/>
            <person name="Thorstenson Y.R."/>
            <person name="Agabian N."/>
            <person name="Magee P.T."/>
            <person name="Davis R.W."/>
            <person name="Scherer S."/>
        </authorList>
    </citation>
    <scope>NUCLEOTIDE SEQUENCE [LARGE SCALE GENOMIC DNA]</scope>
    <source>
        <strain>SC5314 / ATCC MYA-2876</strain>
    </source>
</reference>
<reference key="3">
    <citation type="journal article" date="2007" name="Genome Biol.">
        <title>Assembly of the Candida albicans genome into sixteen supercontigs aligned on the eight chromosomes.</title>
        <authorList>
            <person name="van het Hoog M."/>
            <person name="Rast T.J."/>
            <person name="Martchenko M."/>
            <person name="Grindle S."/>
            <person name="Dignard D."/>
            <person name="Hogues H."/>
            <person name="Cuomo C."/>
            <person name="Berriman M."/>
            <person name="Scherer S."/>
            <person name="Magee B.B."/>
            <person name="Whiteway M."/>
            <person name="Chibana H."/>
            <person name="Nantel A."/>
            <person name="Magee P.T."/>
        </authorList>
    </citation>
    <scope>GENOME REANNOTATION</scope>
    <source>
        <strain>SC5314 / ATCC MYA-2876</strain>
    </source>
</reference>
<reference key="4">
    <citation type="journal article" date="2013" name="Genome Biol.">
        <title>Assembly of a phased diploid Candida albicans genome facilitates allele-specific measurements and provides a simple model for repeat and indel structure.</title>
        <authorList>
            <person name="Muzzey D."/>
            <person name="Schwartz K."/>
            <person name="Weissman J.S."/>
            <person name="Sherlock G."/>
        </authorList>
    </citation>
    <scope>NUCLEOTIDE SEQUENCE [LARGE SCALE GENOMIC DNA]</scope>
    <scope>GENOME REANNOTATION</scope>
    <source>
        <strain>SC5314 / ATCC MYA-2876</strain>
    </source>
</reference>
<reference key="5">
    <citation type="journal article" date="1999" name="J. Bacteriol.">
        <title>HWP1 functions in the morphological development of Candida albicans downstream of EFG1, TUP1, and RBF1.</title>
        <authorList>
            <person name="Sharkey L.L."/>
            <person name="McNemar M.D."/>
            <person name="Saporito-Irwin S.M."/>
            <person name="Sypherd P.S."/>
            <person name="Fonzi W.A."/>
        </authorList>
    </citation>
    <scope>INDUCTION</scope>
</reference>
<reference key="6">
    <citation type="journal article" date="2000" name="Genetics">
        <title>TUP1, CPH1 and EFG1 make independent contributions to filamentation in Candida albicans.</title>
        <authorList>
            <person name="Braun B.R."/>
            <person name="Johnson A.D."/>
        </authorList>
    </citation>
    <scope>INDUCTION</scope>
</reference>
<reference key="7">
    <citation type="journal article" date="2001" name="EMBO J.">
        <title>NRG1 represses yeast-hypha morphogenesis and hypha-specific gene expression in Candida albicans.</title>
        <authorList>
            <person name="Murad A.M."/>
            <person name="Leng P."/>
            <person name="Straffon M."/>
            <person name="Wishart J."/>
            <person name="Macaskill S."/>
            <person name="MacCallum D."/>
            <person name="Schnell N."/>
            <person name="Talibi D."/>
            <person name="Marechal D."/>
            <person name="Tekaia F."/>
            <person name="d'Enfert C."/>
            <person name="Gaillardin C."/>
            <person name="Odds F.C."/>
            <person name="Brown A.J."/>
        </authorList>
    </citation>
    <scope>INDUCTION</scope>
</reference>
<reference key="8">
    <citation type="journal article" date="2005" name="Mol. Biol. Cell">
        <title>Induction of the Candida albicans filamentous growth program by relief of transcriptional repression: a genome-wide analysis.</title>
        <authorList>
            <person name="Kadosh D."/>
            <person name="Johnson A.D."/>
        </authorList>
    </citation>
    <scope>INDUCTION</scope>
</reference>
<reference key="9">
    <citation type="journal article" date="2006" name="PLoS Pathog.">
        <title>Critical role of Bcr1-dependent adhesins in C. albicans biofilm formation in vitro and in vivo.</title>
        <authorList>
            <person name="Nobile C.J."/>
            <person name="Andes D.R."/>
            <person name="Nett J.E."/>
            <person name="Smith F.J."/>
            <person name="Yue F."/>
            <person name="Phan Q.T."/>
            <person name="Edwards J.E."/>
            <person name="Filler S.G."/>
            <person name="Mitchell A.P."/>
        </authorList>
    </citation>
    <scope>FUNCTION</scope>
    <scope>INDUCTION</scope>
</reference>
<reference key="10">
    <citation type="journal article" date="2008" name="BMC Microbiol.">
        <title>Processing of predicted substrates of fungal Kex2 proteinases from Candida albicans, C. glabrata, Saccharomyces cerevisiae and Pichia pastoris.</title>
        <authorList>
            <person name="Bader O."/>
            <person name="Krauke Y."/>
            <person name="Hube B."/>
        </authorList>
    </citation>
    <scope>CLEAVAGE BY KEX2</scope>
</reference>
<reference key="11">
    <citation type="journal article" date="2013" name="Mol. Microbiol.">
        <title>A family of secreted pathogenesis-related proteins in Candida albicans.</title>
        <authorList>
            <person name="Rohm M."/>
            <person name="Lindemann E."/>
            <person name="Hiller E."/>
            <person name="Ermert D."/>
            <person name="Lemuth K."/>
            <person name="Trkulja D."/>
            <person name="Sogukpinar O."/>
            <person name="Brunner H."/>
            <person name="Rupp S."/>
            <person name="Urban C.F."/>
            <person name="Sohn K."/>
        </authorList>
    </citation>
    <scope>SUBCELLULAR LOCATION</scope>
</reference>
<reference key="12">
    <citation type="journal article" date="2014" name="BMC Microbiol.">
        <title>Human serum inhibits adhesion and biofilm formation in Candida albicans.</title>
        <authorList>
            <person name="Ding X."/>
            <person name="Liu Z."/>
            <person name="Su J."/>
            <person name="Yan D."/>
        </authorList>
    </citation>
    <scope>INDUCTION</scope>
</reference>
<reference key="13">
    <citation type="journal article" date="2016" name="Nature">
        <title>Candidalysin is a fungal peptide toxin critical for mucosal infection.</title>
        <authorList>
            <person name="Moyes D.L."/>
            <person name="Wilson D."/>
            <person name="Richardson J.P."/>
            <person name="Mogavero S."/>
            <person name="Tang S.X."/>
            <person name="Wernecke J."/>
            <person name="Hoefs S."/>
            <person name="Gratacap R.L."/>
            <person name="Robbins J."/>
            <person name="Runglall M."/>
            <person name="Murciano C."/>
            <person name="Blagojevic M."/>
            <person name="Thavaraj S."/>
            <person name="Foerster T.M."/>
            <person name="Hebecker B."/>
            <person name="Kasper L."/>
            <person name="Vizcay G."/>
            <person name="Iancu S.I."/>
            <person name="Kichik N."/>
            <person name="Haeder A."/>
            <person name="Kurzai O."/>
            <person name="Luo T."/>
            <person name="Krueger T."/>
            <person name="Kniemeyer O."/>
            <person name="Cota E."/>
            <person name="Bader O."/>
            <person name="Wheeler R.T."/>
            <person name="Gutsmann T."/>
            <person name="Hube B."/>
            <person name="Naglik J.R."/>
        </authorList>
    </citation>
    <scope>FUNCTION (CANDIDALYSIN ECE1-III)</scope>
    <scope>DISRUPTION PHENOTYPE</scope>
    <scope>CLEAVAGE BY KEX2</scope>
    <scope>SUBCELLULAR LOCATION (CANDIDALYSIN ECE1-III)</scope>
</reference>
<reference key="14">
    <citation type="journal article" date="2017" name="Jpn. J. Infect. Dis.">
        <title>Minocycline inhibits Candida albicans budded-to-hyphal-form transition and biofilm formation.</title>
        <authorList>
            <person name="Kurakado S."/>
            <person name="Takatori K."/>
            <person name="Sugita T."/>
        </authorList>
    </citation>
    <scope>INDUCTION</scope>
</reference>
<reference key="15">
    <citation type="journal article" date="2017" name="Sci. Immunol.">
        <title>Oral epithelial cells orchestrate innate type 17 responses to Candida albicans through the virulence factor candidalysin.</title>
        <authorList>
            <person name="Verma A.H."/>
            <person name="Richardson J.P."/>
            <person name="Zhou C."/>
            <person name="Coleman B.M."/>
            <person name="Moyes D.L."/>
            <person name="Ho J."/>
            <person name="Huppler A.R."/>
            <person name="Ramani K."/>
            <person name="McGeachy M.J."/>
            <person name="Mufazalov I.A."/>
            <person name="Waisman A."/>
            <person name="Kane L.P."/>
            <person name="Biswas P.S."/>
            <person name="Hube B."/>
            <person name="Naglik J.R."/>
            <person name="Gaffen S.L."/>
        </authorList>
    </citation>
    <scope>FUNCTION (CANDIDALYSIN ECE1-III)</scope>
    <scope>DISRUPTION PHENOTYPE</scope>
</reference>
<reference key="16">
    <citation type="journal article" date="2018" name="Infect. Immun.">
        <title>Candidalysin Drives Epithelial Signaling, Neutrophil Recruitment, and Immunopathology at the Vaginal Mucosa.</title>
        <authorList>
            <person name="Richardson J.P."/>
            <person name="Willems H.M.E."/>
            <person name="Moyes D.L."/>
            <person name="Shoaie S."/>
            <person name="Barker K.S."/>
            <person name="Tan S.L."/>
            <person name="Palmer G.E."/>
            <person name="Hube B."/>
            <person name="Naglik J.R."/>
            <person name="Peters B.M."/>
        </authorList>
    </citation>
    <scope>FUNCTION (CANDIDALYSIN ECE1-III)</scope>
</reference>
<reference key="17">
    <citation type="journal article" date="2018" name="MBio">
        <title>Processing of Candida albicans Ece1p Is Critical for Candidalysin Maturation and Fungal Virulence.</title>
        <authorList>
            <person name="Richardson J.P."/>
            <person name="Mogavero S."/>
            <person name="Moyes D.L."/>
            <person name="Blagojevic M."/>
            <person name="Krueger T."/>
            <person name="Verma A.H."/>
            <person name="Coleman B.M."/>
            <person name="De La Cruz Diaz J."/>
            <person name="Schulz D."/>
            <person name="Ponde N.O."/>
            <person name="Carrano G."/>
            <person name="Kniemeyer O."/>
            <person name="Wilson D."/>
            <person name="Bader O."/>
            <person name="Enoiu S.I."/>
            <person name="Ho J."/>
            <person name="Kichik N."/>
            <person name="Gaffen S.L."/>
            <person name="Hube B."/>
            <person name="Naglik J.R."/>
        </authorList>
    </citation>
    <scope>FUNCTION</scope>
    <scope>PROCESSING</scope>
    <scope>MUTAGENESIS OF ARG-61 AND ARG-93</scope>
</reference>
<reference key="18">
    <citation type="journal article" date="2018" name="MBio">
        <title>Candida albicans-Induced Epithelial Damage Mediates Translocation through Intestinal Barriers.</title>
        <authorList>
            <person name="Allert S."/>
            <person name="Foerster T.M."/>
            <person name="Svensson C.M."/>
            <person name="Richardson J.P."/>
            <person name="Pawlik T."/>
            <person name="Hebecker B."/>
            <person name="Rudolphi S."/>
            <person name="Juraschitz M."/>
            <person name="Schaller M."/>
            <person name="Blagojevic M."/>
            <person name="Morschhaeuser J."/>
            <person name="Figge M.T."/>
            <person name="Jacobsen I.D."/>
            <person name="Naglik J.R."/>
            <person name="Kasper L."/>
            <person name="Mogavero S."/>
            <person name="Hube B."/>
        </authorList>
    </citation>
    <scope>FUNCTION (CANDIDALYSIN ECE1-III)</scope>
</reference>
<reference key="19">
    <citation type="journal article" date="2018" name="Nat. Commun.">
        <title>The fungal peptide toxin Candidalysin activates the NLRP3 inflammasome and causes cytolysis in mononuclear phagocytes.</title>
        <authorList>
            <person name="Kasper L."/>
            <person name="Koenig A."/>
            <person name="Koenig P.A."/>
            <person name="Gresnigt M.S."/>
            <person name="Westman J."/>
            <person name="Drummond R.A."/>
            <person name="Lionakis M.S."/>
            <person name="Gross O."/>
            <person name="Ruland J."/>
            <person name="Naglik J.R."/>
            <person name="Hube B."/>
        </authorList>
    </citation>
    <scope>FUNCTION (CANDIDALYSIN ECE1-III)</scope>
</reference>
<reference key="20">
    <citation type="journal article" date="2019" name="J. Infect. Dis.">
        <title>Candidalysin is required for neutrophil recruitment and virulence during systemic Candida albicans infection.</title>
        <authorList>
            <person name="Swidergall M."/>
            <person name="Khalaji M."/>
            <person name="Solis N.V."/>
            <person name="Moyes D.L."/>
            <person name="Drummond R.A."/>
            <person name="Hube B."/>
            <person name="Lionakis M.S."/>
            <person name="Murdoch C."/>
            <person name="Filler S.G."/>
            <person name="Naglik J.R."/>
        </authorList>
    </citation>
    <scope>FUNCTION (CANDIDALYSIN ECE1-III)</scope>
    <scope>DISRUPTION PHENOTYPE</scope>
</reference>
<reference key="21">
    <citation type="journal article" date="2019" name="MBio">
        <title>Candidalysin crucially contributes to nlrp3 inflammasome activation by Candida albicans hyphae.</title>
        <authorList>
            <person name="Rogiers O."/>
            <person name="Frising U.C."/>
            <person name="Kucharikova S."/>
            <person name="Jabra-Rizk M.A."/>
            <person name="van Loo G."/>
            <person name="Van Dijck P."/>
            <person name="Wullaert A."/>
        </authorList>
    </citation>
    <scope>FUNCTION (CANDIDALYSIN ECE1-III)</scope>
</reference>
<reference key="22">
    <citation type="journal article" date="2019" name="Nat. Commun.">
        <title>Candidalysin activates innate epithelial immune responses via epidermal growth factor receptor.</title>
        <authorList>
            <person name="Ho J."/>
            <person name="Yang X."/>
            <person name="Nikou S.A."/>
            <person name="Kichik N."/>
            <person name="Donkin A."/>
            <person name="Ponde N.O."/>
            <person name="Richardson J.P."/>
            <person name="Gratacap R.L."/>
            <person name="Archambault L.S."/>
            <person name="Zwirner C.P."/>
            <person name="Murciano C."/>
            <person name="Henley-Smith R."/>
            <person name="Thavaraj S."/>
            <person name="Tynan C.J."/>
            <person name="Gaffen S.L."/>
            <person name="Hube B."/>
            <person name="Wheeler R.T."/>
            <person name="Moyes D.L."/>
            <person name="Naglik J.R."/>
        </authorList>
    </citation>
    <scope>FUNCTION (CANDIDALYSIN ECE1-III)</scope>
</reference>
<reference key="23">
    <citation type="journal article" date="2020" name="J. Hepatol.">
        <title>The Candida albicans exotoxin candidalysin promotes alcohol-associated liver disease.</title>
        <authorList>
            <person name="Chu H."/>
            <person name="Duan Y."/>
            <person name="Lang S."/>
            <person name="Jiang L."/>
            <person name="Wang Y."/>
            <person name="Llorente C."/>
            <person name="Liu J."/>
            <person name="Mogavero S."/>
            <person name="Bosques-Padilla F."/>
            <person name="Abraldes J.G."/>
            <person name="Vargas V."/>
            <person name="Tu X.M."/>
            <person name="Yang L."/>
            <person name="Hou X."/>
            <person name="Hube B."/>
            <person name="Staerkel P."/>
            <person name="Schnabl B."/>
        </authorList>
    </citation>
    <scope>FUNCTION (CANDIDALYSIN ECE1-III)</scope>
</reference>
<reference key="24">
    <citation type="journal article" date="2020" name="J. Oral Pathol. Med.">
        <title>The role of Candida albicans candidalysin ECE1 gene in oral carcinogenesis.</title>
        <authorList>
            <person name="Engku Nasrullah Satiman E.A.F."/>
            <person name="Ahmad H."/>
            <person name="Ramzi A.B."/>
            <person name="Abdul Wahab R."/>
            <person name="Kaderi M.A."/>
            <person name="Wan Harun W.H.A."/>
            <person name="Dashper S."/>
            <person name="McCullough M."/>
            <person name="Arzmi M.H."/>
        </authorList>
    </citation>
    <scope>FUNCTION (CANDIDALYSIN ECE1-III)</scope>
</reference>
<reference key="25">
    <citation type="journal article" date="2020" name="MBio">
        <title>Ahr1 and Tup1 contribute to the transcriptional control of virulence-sssociated genes in Candida albicans.</title>
        <authorList>
            <person name="Ruben S."/>
            <person name="Garbe E."/>
            <person name="Mogavero S."/>
            <person name="Albrecht-Eckardt D."/>
            <person name="Hellwig D."/>
            <person name="Haeder A."/>
            <person name="Krueger T."/>
            <person name="Gerth K."/>
            <person name="Jacobsen I.D."/>
            <person name="Elshafee O."/>
            <person name="Brunke S."/>
            <person name="Huenniger K."/>
            <person name="Kniemeyer O."/>
            <person name="Brakhage A.A."/>
            <person name="Morschhaeuser J."/>
            <person name="Hube B."/>
            <person name="Vylkova S."/>
            <person name="Kurzai O."/>
            <person name="Martin R."/>
        </authorList>
    </citation>
    <scope>INDUCTION</scope>
</reference>
<reference key="26">
    <citation type="journal article" date="2021" name="Cell. Microbiol.">
        <title>Candidalysin triggers epithelial cellular stresses that induce necrotic death.</title>
        <authorList>
            <person name="Blagojevic M."/>
            <person name="Camilli G."/>
            <person name="Maxson M."/>
            <person name="Hube B."/>
            <person name="Moyes D.L."/>
            <person name="Richardson J.P."/>
            <person name="Naglik J.R."/>
        </authorList>
    </citation>
    <scope>FUNCTION (CANDIDALYSIN ECE1-III)</scope>
</reference>
<reference key="27">
    <citation type="journal article" date="2021" name="Cell. Microbiol.">
        <title>Candidalysin delivery to the invasion pocket is critical for host epithelial damage induced by Candida albicans.</title>
        <authorList>
            <person name="Mogavero S."/>
            <person name="Sauer F.M."/>
            <person name="Brunke S."/>
            <person name="Allert S."/>
            <person name="Schulz D."/>
            <person name="Wisgott S."/>
            <person name="Jablonowski N."/>
            <person name="Elshafee O."/>
            <person name="Krueger T."/>
            <person name="Kniemeyer O."/>
            <person name="Brakhage A.A."/>
            <person name="Naglik J.R."/>
            <person name="Dolk E."/>
            <person name="Hube B."/>
        </authorList>
    </citation>
    <scope>FUNCTION (CANDIDALYSIN ECE1-III)</scope>
    <scope>SUBCELLULAR LOCATION (CANDIDALYSIN ECE1-III)</scope>
</reference>
<reference key="28">
    <citation type="journal article" date="2021" name="Int. Immunol.">
        <title>IL-1alpha released from oral epithelial cells upon candidalysin exposure initiates an early innate epithelial response.</title>
        <authorList>
            <person name="Hanaoka M."/>
            <person name="Domae E."/>
        </authorList>
    </citation>
    <scope>FUNCTION (CANDIDALYSIN ECE1-III)</scope>
</reference>
<reference key="29">
    <citation type="journal article" date="2022" name="Cell Rep.">
        <title>The escape of Candida albicans from macrophages is enabled by the fungal toxin candidalysin and two host cell death pathways.</title>
        <authorList>
            <person name="Olivier F.A.B."/>
            <person name="Hilsenstein V."/>
            <person name="Weerasinghe H."/>
            <person name="Weir A."/>
            <person name="Hughes S."/>
            <person name="Crawford S."/>
            <person name="Vince J.E."/>
            <person name="Hickey M.J."/>
            <person name="Traven A."/>
        </authorList>
    </citation>
    <scope>FUNCTION (CANDIDALYSIN ECE1-III)</scope>
</reference>
<reference key="30">
    <citation type="journal article" date="2022" name="Elife">
        <title>The Candida albicans virulence factor candidalysin polymerizes in solution to form membrane pores and damage epithelial cells.</title>
        <authorList>
            <person name="Russell C.M."/>
            <person name="Schaefer K.G."/>
            <person name="Dixson A."/>
            <person name="Gray A.L.H."/>
            <person name="Pyron R.J."/>
            <person name="Alves D.S."/>
            <person name="Moore N."/>
            <person name="Conley E.A."/>
            <person name="Schuck R.J."/>
            <person name="White T.A."/>
            <person name="Do T.D."/>
            <person name="King G.M."/>
            <person name="Barrera F.N."/>
        </authorList>
    </citation>
    <scope>FUNCTION (CANDIDALYSIN ECE1-III)</scope>
    <scope>SUBUNIT</scope>
    <scope>MUTAGENESIS OF GLY-65</scope>
</reference>
<reference key="31">
    <citation type="journal article" date="2022" name="J. Biol. Chem.">
        <title>Receptor-kinase EGFR-MAPK adaptor proteins mediate the epithelial response to Candida albicans via the cytolytic peptide toxin, candidalysin.</title>
        <authorList>
            <person name="Ponde N.O."/>
            <person name="Lortal L."/>
            <person name="Tsavou A."/>
            <person name="Hepworth O.W."/>
            <person name="Wickramasinghe D.N."/>
            <person name="Ho J."/>
            <person name="Richardson J.P."/>
            <person name="Moyes D.L."/>
            <person name="Gaffen S.L."/>
            <person name="Naglik J.R."/>
        </authorList>
    </citation>
    <scope>FUNCTION (CANDIDALYSIN ECE1-III)</scope>
</reference>
<reference key="32">
    <citation type="journal article" date="2022" name="J. Clin. Immunol.">
        <title>Candidalysin, a virulence factor of Candida albicans, stimulates mast Cells by mediating cross-talk between signaling pathways activated by the dectin-1 receptor and MAPKs.</title>
        <authorList>
            <person name="Song P."/>
            <person name="Peng G."/>
            <person name="Yue H."/>
            <person name="Ogawa T."/>
            <person name="Ikeda S."/>
            <person name="Okumura K."/>
            <person name="Ogawa H."/>
            <person name="Niyonsaba F."/>
        </authorList>
    </citation>
    <scope>FUNCTION (CANDIDALYSIN ECE1-III)</scope>
    <scope>DISRUPTION PHENOTYPE</scope>
</reference>
<reference key="33">
    <citation type="journal article" date="2022" name="MBio">
        <title>Candidalysins are a new family of cytolytic fungal peptide toxins.</title>
        <authorList>
            <person name="Richardson J.P."/>
            <person name="Brown R."/>
            <person name="Kichik N."/>
            <person name="Lee S."/>
            <person name="Priest E."/>
            <person name="Mogavero S."/>
            <person name="Maufrais C."/>
            <person name="Wickramasinghe D.N."/>
            <person name="Tsavou A."/>
            <person name="Kotowicz N.K."/>
            <person name="Hepworth O.W."/>
            <person name="Gallego-Cortes A."/>
            <person name="Ponde N.O."/>
            <person name="Ho J."/>
            <person name="Moyes D.L."/>
            <person name="Wilson D."/>
            <person name="D'Enfert C."/>
            <person name="Hube B."/>
            <person name="Naglik J.R."/>
        </authorList>
    </citation>
    <scope>FUNCTION (CANDIDALYSIN ECE1-III)</scope>
    <scope>INDUCTION</scope>
</reference>
<reference key="34">
    <citation type="journal article" date="2022" name="Sci. Signal.">
        <title>The Candida albicans toxin candidalysin mediates distinct epithelial inflammatory responses through p38 and EGFR-ERK pathways.</title>
        <authorList>
            <person name="Nikou S.A."/>
            <person name="Zhou C."/>
            <person name="Griffiths J.S."/>
            <person name="Kotowicz N.K."/>
            <person name="Coleman B.M."/>
            <person name="Green M.J."/>
            <person name="Moyes D.L."/>
            <person name="Gaffen S.L."/>
            <person name="Naglik J.R."/>
            <person name="Parker P.J."/>
        </authorList>
    </citation>
    <scope>FUNCTION (CANDIDALYSIN ECE1-III)</scope>
</reference>
<reference key="35">
    <citation type="journal article" date="2022" name="Toxins">
        <title>Candidalysin is the hemolytic factor of Candida albicans.</title>
        <authorList>
            <person name="Mogavero S."/>
            <person name="Hoefs S."/>
            <person name="Lauer A.N."/>
            <person name="Mueller R."/>
            <person name="Brunke S."/>
            <person name="Allert S."/>
            <person name="Gerwien F."/>
            <person name="Groth S."/>
            <person name="Dolk E."/>
            <person name="Wilson D."/>
            <person name="Gutsmann T."/>
            <person name="Hube B."/>
        </authorList>
    </citation>
    <scope>FUNCTION (CANDIDALYSIN ECE1-III)</scope>
</reference>
<reference key="36">
    <citation type="journal article" date="2023" name="Int. Immunopharmacol.">
        <title>Candidalysin amplifies the immune inflammatory response in Candida albicans keratitis through the TREM-1/DAP12 pathway.</title>
        <authorList>
            <person name="Hu L."/>
            <person name="Bai G."/>
            <person name="Xu Q."/>
            <person name="Zhao G."/>
            <person name="Jiang N."/>
            <person name="Yao H."/>
            <person name="Liu X."/>
            <person name="Du Z."/>
        </authorList>
    </citation>
    <scope>FUNCTION (CANDIDALYSIN ECE1-III)</scope>
</reference>
<reference key="37">
    <citation type="journal article" date="2023" name="Int. J. Mol. Sci.">
        <title>Effects of candidalysin derived from Candida albicans on the expression of pro-inflammatory mediators in human gingival fibroblasts.</title>
        <authorList>
            <person name="Nishikawa Y."/>
            <person name="Tomotake Y."/>
            <person name="Kawano H."/>
            <person name="Naruishi K."/>
            <person name="Kido J.I."/>
            <person name="Hiroshima Y."/>
            <person name="Murakami A."/>
            <person name="Ichikawa T."/>
            <person name="Yumoto H."/>
        </authorList>
    </citation>
    <scope>FUNCTION (CANDIDALYSIN ECE1-III)</scope>
</reference>
<reference key="38">
    <citation type="journal article" date="2023" name="Microbiol. Spectr.">
        <title>Functional analysis of the Candida albicans ECE1 Promoter.</title>
        <authorList>
            <person name="Garbe E."/>
            <person name="Thielemann N."/>
            <person name="Hohner S."/>
            <person name="Kumar A."/>
            <person name="Vylkova S."/>
            <person name="Kurzai O."/>
            <person name="Martin R."/>
        </authorList>
    </citation>
    <scope>INDUCTION</scope>
</reference>
<sequence>MKFSKIACATVFALSSQAAIIHHAPEFNMKRDVAPAAPAAPADQAPTVPAPQEFNTAITKRSIIGIIMGILGNIPQVIQIIMSIVKAFKGNKREDIDSVVAGIIADMPFVVRAVDTAMTSVASTKRDGANDDVANAVVRLPEIVARVATGVQQSIENAKRDGVPDVGLNLVANAPRLISNVFDGVSETVQQAKRDGLEDFLDELLQRLPQLITRSAESALKDSQPVKRDAGSVALSNLIKKSIETVGIENAAQIVSERDISSLIEEYFGKA</sequence>
<proteinExistence type="evidence at protein level"/>
<protein>
    <recommendedName>
        <fullName evidence="38">Extent of cell elongation protein 1</fullName>
    </recommendedName>
    <component>
        <recommendedName>
            <fullName evidence="37">ECE1-I</fullName>
        </recommendedName>
    </component>
    <component>
        <recommendedName>
            <fullName evidence="37">ECE1-II</fullName>
        </recommendedName>
    </component>
    <component>
        <recommendedName>
            <fullName evidence="37">Candidalysin ECE1-III</fullName>
        </recommendedName>
    </component>
    <component>
        <recommendedName>
            <fullName evidence="37">ECE1-IV</fullName>
        </recommendedName>
    </component>
    <component>
        <recommendedName>
            <fullName evidence="37">ECE1-V</fullName>
        </recommendedName>
    </component>
    <component>
        <recommendedName>
            <fullName evidence="37">ECE1-VI</fullName>
        </recommendedName>
    </component>
    <component>
        <recommendedName>
            <fullName evidence="37">ECE1-VII</fullName>
        </recommendedName>
    </component>
    <component>
        <recommendedName>
            <fullName evidence="37">ECE1-VIII</fullName>
        </recommendedName>
    </component>
</protein>
<accession>Q07730</accession>
<accession>A0A1D8PLT9</accession>
<accession>Q59PG4</accession>
<evidence type="ECO:0000255" key="1"/>
<evidence type="ECO:0000269" key="2">
    <source>
    </source>
</evidence>
<evidence type="ECO:0000269" key="3">
    <source>
    </source>
</evidence>
<evidence type="ECO:0000269" key="4">
    <source>
    </source>
</evidence>
<evidence type="ECO:0000269" key="5">
    <source>
    </source>
</evidence>
<evidence type="ECO:0000269" key="6">
    <source>
    </source>
</evidence>
<evidence type="ECO:0000269" key="7">
    <source>
    </source>
</evidence>
<evidence type="ECO:0000269" key="8">
    <source>
    </source>
</evidence>
<evidence type="ECO:0000269" key="9">
    <source>
    </source>
</evidence>
<evidence type="ECO:0000269" key="10">
    <source>
    </source>
</evidence>
<evidence type="ECO:0000269" key="11">
    <source>
    </source>
</evidence>
<evidence type="ECO:0000269" key="12">
    <source>
    </source>
</evidence>
<evidence type="ECO:0000269" key="13">
    <source>
    </source>
</evidence>
<evidence type="ECO:0000269" key="14">
    <source>
    </source>
</evidence>
<evidence type="ECO:0000269" key="15">
    <source>
    </source>
</evidence>
<evidence type="ECO:0000269" key="16">
    <source>
    </source>
</evidence>
<evidence type="ECO:0000269" key="17">
    <source>
    </source>
</evidence>
<evidence type="ECO:0000269" key="18">
    <source>
    </source>
</evidence>
<evidence type="ECO:0000269" key="19">
    <source>
    </source>
</evidence>
<evidence type="ECO:0000269" key="20">
    <source>
    </source>
</evidence>
<evidence type="ECO:0000269" key="21">
    <source>
    </source>
</evidence>
<evidence type="ECO:0000269" key="22">
    <source>
    </source>
</evidence>
<evidence type="ECO:0000269" key="23">
    <source>
    </source>
</evidence>
<evidence type="ECO:0000269" key="24">
    <source>
    </source>
</evidence>
<evidence type="ECO:0000269" key="25">
    <source>
    </source>
</evidence>
<evidence type="ECO:0000269" key="26">
    <source>
    </source>
</evidence>
<evidence type="ECO:0000269" key="27">
    <source>
    </source>
</evidence>
<evidence type="ECO:0000269" key="28">
    <source>
    </source>
</evidence>
<evidence type="ECO:0000269" key="29">
    <source>
    </source>
</evidence>
<evidence type="ECO:0000269" key="30">
    <source>
    </source>
</evidence>
<evidence type="ECO:0000269" key="31">
    <source>
    </source>
</evidence>
<evidence type="ECO:0000269" key="32">
    <source>
    </source>
</evidence>
<evidence type="ECO:0000269" key="33">
    <source>
    </source>
</evidence>
<evidence type="ECO:0000269" key="34">
    <source>
    </source>
</evidence>
<evidence type="ECO:0000269" key="35">
    <source>
    </source>
</evidence>
<evidence type="ECO:0000269" key="36">
    <source>
    </source>
</evidence>
<evidence type="ECO:0000303" key="37">
    <source>
    </source>
</evidence>
<evidence type="ECO:0000303" key="38">
    <source>
    </source>
</evidence>
<evidence type="ECO:0000305" key="39">
    <source>
    </source>
</evidence>
<organism>
    <name type="scientific">Candida albicans (strain SC5314 / ATCC MYA-2876)</name>
    <name type="common">Yeast</name>
    <dbReference type="NCBI Taxonomy" id="237561"/>
    <lineage>
        <taxon>Eukaryota</taxon>
        <taxon>Fungi</taxon>
        <taxon>Dikarya</taxon>
        <taxon>Ascomycota</taxon>
        <taxon>Saccharomycotina</taxon>
        <taxon>Pichiomycetes</taxon>
        <taxon>Debaryomycetaceae</taxon>
        <taxon>Candida/Lodderomyces clade</taxon>
        <taxon>Candida</taxon>
    </lineage>
</organism>